<comment type="function">
    <text evidence="1">Allows the formation of correctly charged Asn-tRNA(Asn) or Gln-tRNA(Gln) through the transamidation of misacylated Asp-tRNA(Asn) or Glu-tRNA(Gln) in organisms which lack either or both of asparaginyl-tRNA or glutaminyl-tRNA synthetases. The reaction takes place in the presence of glutamine and ATP through an activated phospho-Asp-tRNA(Asn) or phospho-Glu-tRNA(Gln).</text>
</comment>
<comment type="catalytic activity">
    <reaction evidence="1">
        <text>L-glutamyl-tRNA(Gln) + L-glutamine + ATP + H2O = L-glutaminyl-tRNA(Gln) + L-glutamate + ADP + phosphate + H(+)</text>
        <dbReference type="Rhea" id="RHEA:17521"/>
        <dbReference type="Rhea" id="RHEA-COMP:9681"/>
        <dbReference type="Rhea" id="RHEA-COMP:9684"/>
        <dbReference type="ChEBI" id="CHEBI:15377"/>
        <dbReference type="ChEBI" id="CHEBI:15378"/>
        <dbReference type="ChEBI" id="CHEBI:29985"/>
        <dbReference type="ChEBI" id="CHEBI:30616"/>
        <dbReference type="ChEBI" id="CHEBI:43474"/>
        <dbReference type="ChEBI" id="CHEBI:58359"/>
        <dbReference type="ChEBI" id="CHEBI:78520"/>
        <dbReference type="ChEBI" id="CHEBI:78521"/>
        <dbReference type="ChEBI" id="CHEBI:456216"/>
    </reaction>
</comment>
<comment type="catalytic activity">
    <reaction evidence="1">
        <text>L-aspartyl-tRNA(Asn) + L-glutamine + ATP + H2O = L-asparaginyl-tRNA(Asn) + L-glutamate + ADP + phosphate + 2 H(+)</text>
        <dbReference type="Rhea" id="RHEA:14513"/>
        <dbReference type="Rhea" id="RHEA-COMP:9674"/>
        <dbReference type="Rhea" id="RHEA-COMP:9677"/>
        <dbReference type="ChEBI" id="CHEBI:15377"/>
        <dbReference type="ChEBI" id="CHEBI:15378"/>
        <dbReference type="ChEBI" id="CHEBI:29985"/>
        <dbReference type="ChEBI" id="CHEBI:30616"/>
        <dbReference type="ChEBI" id="CHEBI:43474"/>
        <dbReference type="ChEBI" id="CHEBI:58359"/>
        <dbReference type="ChEBI" id="CHEBI:78515"/>
        <dbReference type="ChEBI" id="CHEBI:78516"/>
        <dbReference type="ChEBI" id="CHEBI:456216"/>
    </reaction>
</comment>
<comment type="subunit">
    <text evidence="1">Heterotrimer of A, B and C subunits.</text>
</comment>
<comment type="similarity">
    <text evidence="1">Belongs to the GatC family.</text>
</comment>
<protein>
    <recommendedName>
        <fullName evidence="1">Aspartyl/glutamyl-tRNA(Asn/Gln) amidotransferase subunit C</fullName>
        <shortName evidence="1">Asp/Glu-ADT subunit C</shortName>
        <ecNumber evidence="1">6.3.5.-</ecNumber>
    </recommendedName>
</protein>
<keyword id="KW-0067">ATP-binding</keyword>
<keyword id="KW-0436">Ligase</keyword>
<keyword id="KW-0547">Nucleotide-binding</keyword>
<keyword id="KW-0648">Protein biosynthesis</keyword>
<keyword id="KW-1185">Reference proteome</keyword>
<evidence type="ECO:0000255" key="1">
    <source>
        <dbReference type="HAMAP-Rule" id="MF_00122"/>
    </source>
</evidence>
<reference key="1">
    <citation type="journal article" date="2010" name="J. Bacteriol.">
        <title>Complete genome sequence of Beijerinckia indica subsp. indica.</title>
        <authorList>
            <person name="Tamas I."/>
            <person name="Dedysh S.N."/>
            <person name="Liesack W."/>
            <person name="Stott M.B."/>
            <person name="Alam M."/>
            <person name="Murrell J.C."/>
            <person name="Dunfield P.F."/>
        </authorList>
    </citation>
    <scope>NUCLEOTIDE SEQUENCE [LARGE SCALE GENOMIC DNA]</scope>
    <source>
        <strain>ATCC 9039 / DSM 1715 / NCIMB 8712</strain>
    </source>
</reference>
<organism>
    <name type="scientific">Beijerinckia indica subsp. indica (strain ATCC 9039 / DSM 1715 / NCIMB 8712)</name>
    <dbReference type="NCBI Taxonomy" id="395963"/>
    <lineage>
        <taxon>Bacteria</taxon>
        <taxon>Pseudomonadati</taxon>
        <taxon>Pseudomonadota</taxon>
        <taxon>Alphaproteobacteria</taxon>
        <taxon>Hyphomicrobiales</taxon>
        <taxon>Beijerinckiaceae</taxon>
        <taxon>Beijerinckia</taxon>
    </lineage>
</organism>
<sequence>MSVDAVTVRKIAHLARIKVNDADVPHVQEELNAILAFVEQLASVDVEGVEPMTSVMPMPMTKREDIVTDGGIADAIVANAPATEDHFFVVPKVVE</sequence>
<name>GATC_BEII9</name>
<proteinExistence type="inferred from homology"/>
<dbReference type="EC" id="6.3.5.-" evidence="1"/>
<dbReference type="EMBL" id="CP001016">
    <property type="protein sequence ID" value="ACB95503.1"/>
    <property type="molecule type" value="Genomic_DNA"/>
</dbReference>
<dbReference type="RefSeq" id="WP_012384860.1">
    <property type="nucleotide sequence ID" value="NC_010581.1"/>
</dbReference>
<dbReference type="SMR" id="B2IEA5"/>
<dbReference type="STRING" id="395963.Bind_1879"/>
<dbReference type="KEGG" id="bid:Bind_1879"/>
<dbReference type="eggNOG" id="COG0721">
    <property type="taxonomic scope" value="Bacteria"/>
</dbReference>
<dbReference type="HOGENOM" id="CLU_105899_2_0_5"/>
<dbReference type="OrthoDB" id="9794326at2"/>
<dbReference type="Proteomes" id="UP000001695">
    <property type="component" value="Chromosome"/>
</dbReference>
<dbReference type="GO" id="GO:0050566">
    <property type="term" value="F:asparaginyl-tRNA synthase (glutamine-hydrolyzing) activity"/>
    <property type="evidence" value="ECO:0007669"/>
    <property type="project" value="RHEA"/>
</dbReference>
<dbReference type="GO" id="GO:0005524">
    <property type="term" value="F:ATP binding"/>
    <property type="evidence" value="ECO:0007669"/>
    <property type="project" value="UniProtKB-KW"/>
</dbReference>
<dbReference type="GO" id="GO:0050567">
    <property type="term" value="F:glutaminyl-tRNA synthase (glutamine-hydrolyzing) activity"/>
    <property type="evidence" value="ECO:0007669"/>
    <property type="project" value="UniProtKB-UniRule"/>
</dbReference>
<dbReference type="GO" id="GO:0070681">
    <property type="term" value="P:glutaminyl-tRNAGln biosynthesis via transamidation"/>
    <property type="evidence" value="ECO:0007669"/>
    <property type="project" value="TreeGrafter"/>
</dbReference>
<dbReference type="GO" id="GO:0006450">
    <property type="term" value="P:regulation of translational fidelity"/>
    <property type="evidence" value="ECO:0007669"/>
    <property type="project" value="InterPro"/>
</dbReference>
<dbReference type="GO" id="GO:0006412">
    <property type="term" value="P:translation"/>
    <property type="evidence" value="ECO:0007669"/>
    <property type="project" value="UniProtKB-UniRule"/>
</dbReference>
<dbReference type="Gene3D" id="1.10.20.60">
    <property type="entry name" value="Glu-tRNAGln amidotransferase C subunit, N-terminal domain"/>
    <property type="match status" value="1"/>
</dbReference>
<dbReference type="HAMAP" id="MF_00122">
    <property type="entry name" value="GatC"/>
    <property type="match status" value="1"/>
</dbReference>
<dbReference type="InterPro" id="IPR036113">
    <property type="entry name" value="Asp/Glu-ADT_sf_sub_c"/>
</dbReference>
<dbReference type="InterPro" id="IPR003837">
    <property type="entry name" value="GatC"/>
</dbReference>
<dbReference type="NCBIfam" id="TIGR00135">
    <property type="entry name" value="gatC"/>
    <property type="match status" value="1"/>
</dbReference>
<dbReference type="PANTHER" id="PTHR15004">
    <property type="entry name" value="GLUTAMYL-TRNA(GLN) AMIDOTRANSFERASE SUBUNIT C, MITOCHONDRIAL"/>
    <property type="match status" value="1"/>
</dbReference>
<dbReference type="PANTHER" id="PTHR15004:SF0">
    <property type="entry name" value="GLUTAMYL-TRNA(GLN) AMIDOTRANSFERASE SUBUNIT C, MITOCHONDRIAL"/>
    <property type="match status" value="1"/>
</dbReference>
<dbReference type="Pfam" id="PF02686">
    <property type="entry name" value="GatC"/>
    <property type="match status" value="1"/>
</dbReference>
<dbReference type="SUPFAM" id="SSF141000">
    <property type="entry name" value="Glu-tRNAGln amidotransferase C subunit"/>
    <property type="match status" value="1"/>
</dbReference>
<accession>B2IEA5</accession>
<gene>
    <name evidence="1" type="primary">gatC</name>
    <name type="ordered locus">Bind_1879</name>
</gene>
<feature type="chain" id="PRO_1000095261" description="Aspartyl/glutamyl-tRNA(Asn/Gln) amidotransferase subunit C">
    <location>
        <begin position="1"/>
        <end position="95"/>
    </location>
</feature>